<evidence type="ECO:0000250" key="1"/>
<evidence type="ECO:0000255" key="2"/>
<evidence type="ECO:0000255" key="3">
    <source>
        <dbReference type="PROSITE-ProRule" id="PRU00114"/>
    </source>
</evidence>
<evidence type="ECO:0000256" key="4">
    <source>
        <dbReference type="SAM" id="MobiDB-lite"/>
    </source>
</evidence>
<evidence type="ECO:0000269" key="5">
    <source>
    </source>
</evidence>
<evidence type="ECO:0000305" key="6"/>
<name>CLMP_RAT</name>
<comment type="function">
    <text evidence="1 5">May be involved in the cell-cell adhesion. May play a role in adipocyte differentiation and development of obesity. Is required for normal small intestine development (By similarity).</text>
</comment>
<comment type="subcellular location">
    <subcellularLocation>
        <location evidence="1">Cell junction</location>
        <location evidence="1">Tight junction</location>
    </subcellularLocation>
    <subcellularLocation>
        <location evidence="1">Cell membrane</location>
        <topology evidence="6">Single-pass type I membrane protein</topology>
    </subcellularLocation>
</comment>
<comment type="tissue specificity">
    <text evidence="5">Predominantly expressed in the white adipose tissue.</text>
</comment>
<comment type="developmental stage">
    <text evidence="5">At 6 weeks of age, detected in mesenteric and retroperitoneal fat pads. Expression prominently increases in mesenteric and subdermal adipose tissues at 30 weeks and is barely detectable at 50 weeks.</text>
</comment>
<comment type="induction">
    <text evidence="5">Up-regulated in mature adipocytes and adipocyte tissue of obese animals.</text>
</comment>
<protein>
    <recommendedName>
        <fullName>CXADR-like membrane protein</fullName>
    </recommendedName>
    <alternativeName>
        <fullName>Adipocyte adhesion molecule</fullName>
    </alternativeName>
    <alternativeName>
        <fullName>Coxsackie- and adenovirus receptor-like membrane protein</fullName>
        <shortName>CAR-like membrane protein</shortName>
    </alternativeName>
</protein>
<reference key="1">
    <citation type="journal article" date="2005" name="Biochem. J.">
        <title>Identification of adipocyte adhesion molecule (ACAM), a novel CTX gene family, implicated in adipocyte maturation and development of obesity.</title>
        <authorList>
            <person name="Eguchi J."/>
            <person name="Wada J."/>
            <person name="Hida K."/>
            <person name="Zhang H."/>
            <person name="Matsuoka T."/>
            <person name="Baba M."/>
            <person name="Hashimoto I."/>
            <person name="Shikata K."/>
            <person name="Ogawa N."/>
            <person name="Makino H."/>
        </authorList>
    </citation>
    <scope>NUCLEOTIDE SEQUENCE [MRNA]</scope>
    <scope>FUNCTION</scope>
    <scope>INDUCTION</scope>
    <scope>TISSUE SPECIFICITY</scope>
    <scope>DEVELOPMENTAL STAGE</scope>
    <source>
        <strain>OLETF</strain>
        <tissue>Adipose tissue</tissue>
    </source>
</reference>
<accession>Q8K1G0</accession>
<dbReference type="EMBL" id="AF302047">
    <property type="protein sequence ID" value="AAM76974.1"/>
    <property type="molecule type" value="mRNA"/>
</dbReference>
<dbReference type="RefSeq" id="NP_775177.1">
    <property type="nucleotide sequence ID" value="NM_173154.2"/>
</dbReference>
<dbReference type="RefSeq" id="XP_017450986.1">
    <property type="nucleotide sequence ID" value="XM_017595497.1"/>
</dbReference>
<dbReference type="SMR" id="Q8K1G0"/>
<dbReference type="FunCoup" id="Q8K1G0">
    <property type="interactions" value="929"/>
</dbReference>
<dbReference type="STRING" id="10116.ENSRNOP00000069336"/>
<dbReference type="GlyCosmos" id="Q8K1G0">
    <property type="glycosylation" value="2 sites, No reported glycans"/>
</dbReference>
<dbReference type="GlyGen" id="Q8K1G0">
    <property type="glycosylation" value="2 sites"/>
</dbReference>
<dbReference type="PhosphoSitePlus" id="Q8K1G0"/>
<dbReference type="PaxDb" id="10116-ENSRNOP00000010607"/>
<dbReference type="Ensembl" id="ENSRNOT00000080288.2">
    <property type="protein sequence ID" value="ENSRNOP00000069336.1"/>
    <property type="gene ID" value="ENSRNOG00000053239.2"/>
</dbReference>
<dbReference type="GeneID" id="286939"/>
<dbReference type="KEGG" id="rno:286939"/>
<dbReference type="UCSC" id="RGD:708569">
    <property type="organism name" value="rat"/>
</dbReference>
<dbReference type="AGR" id="RGD:708569"/>
<dbReference type="CTD" id="79827"/>
<dbReference type="RGD" id="708569">
    <property type="gene designation" value="Clmp"/>
</dbReference>
<dbReference type="eggNOG" id="KOG3866">
    <property type="taxonomic scope" value="Eukaryota"/>
</dbReference>
<dbReference type="GeneTree" id="ENSGT00940000161031"/>
<dbReference type="HOGENOM" id="CLU_040549_0_1_1"/>
<dbReference type="InParanoid" id="Q8K1G0"/>
<dbReference type="OrthoDB" id="74605at9989"/>
<dbReference type="PhylomeDB" id="Q8K1G0"/>
<dbReference type="TreeFam" id="TF330875"/>
<dbReference type="PRO" id="PR:Q8K1G0"/>
<dbReference type="Proteomes" id="UP000002494">
    <property type="component" value="Chromosome 8"/>
</dbReference>
<dbReference type="Bgee" id="ENSRNOG00000053239">
    <property type="expression patterns" value="Expressed in colon and 19 other cell types or tissues"/>
</dbReference>
<dbReference type="GO" id="GO:0005923">
    <property type="term" value="C:bicellular tight junction"/>
    <property type="evidence" value="ECO:0000266"/>
    <property type="project" value="RGD"/>
</dbReference>
<dbReference type="GO" id="GO:0005881">
    <property type="term" value="C:cytoplasmic microtubule"/>
    <property type="evidence" value="ECO:0000250"/>
    <property type="project" value="UniProtKB"/>
</dbReference>
<dbReference type="GO" id="GO:0045211">
    <property type="term" value="C:postsynaptic membrane"/>
    <property type="evidence" value="ECO:0000266"/>
    <property type="project" value="RGD"/>
</dbReference>
<dbReference type="GO" id="GO:0048565">
    <property type="term" value="P:digestive tract development"/>
    <property type="evidence" value="ECO:0000266"/>
    <property type="project" value="RGD"/>
</dbReference>
<dbReference type="GO" id="GO:0099170">
    <property type="term" value="P:postsynaptic modulation of chemical synaptic transmission"/>
    <property type="evidence" value="ECO:0000266"/>
    <property type="project" value="RGD"/>
</dbReference>
<dbReference type="CDD" id="cd00096">
    <property type="entry name" value="Ig"/>
    <property type="match status" value="1"/>
</dbReference>
<dbReference type="CDD" id="cd20960">
    <property type="entry name" value="IgV_CAR_like"/>
    <property type="match status" value="1"/>
</dbReference>
<dbReference type="FunFam" id="2.60.40.10:FF:000764">
    <property type="entry name" value="CXADR like membrane protein"/>
    <property type="match status" value="1"/>
</dbReference>
<dbReference type="FunFam" id="2.60.40.10:FF:000095">
    <property type="entry name" value="immunoglobulin superfamily member 11 isoform X1"/>
    <property type="match status" value="1"/>
</dbReference>
<dbReference type="Gene3D" id="2.60.40.10">
    <property type="entry name" value="Immunoglobulins"/>
    <property type="match status" value="2"/>
</dbReference>
<dbReference type="InterPro" id="IPR042454">
    <property type="entry name" value="CLMP"/>
</dbReference>
<dbReference type="InterPro" id="IPR007110">
    <property type="entry name" value="Ig-like_dom"/>
</dbReference>
<dbReference type="InterPro" id="IPR036179">
    <property type="entry name" value="Ig-like_dom_sf"/>
</dbReference>
<dbReference type="InterPro" id="IPR013783">
    <property type="entry name" value="Ig-like_fold"/>
</dbReference>
<dbReference type="InterPro" id="IPR003599">
    <property type="entry name" value="Ig_sub"/>
</dbReference>
<dbReference type="InterPro" id="IPR003598">
    <property type="entry name" value="Ig_sub2"/>
</dbReference>
<dbReference type="InterPro" id="IPR013106">
    <property type="entry name" value="Ig_V-set"/>
</dbReference>
<dbReference type="PANTHER" id="PTHR44783">
    <property type="entry name" value="CXADR-LIKE MEMBRANE PROTEIN"/>
    <property type="match status" value="1"/>
</dbReference>
<dbReference type="PANTHER" id="PTHR44783:SF1">
    <property type="entry name" value="CXADR-LIKE MEMBRANE PROTEIN"/>
    <property type="match status" value="1"/>
</dbReference>
<dbReference type="Pfam" id="PF13927">
    <property type="entry name" value="Ig_3"/>
    <property type="match status" value="1"/>
</dbReference>
<dbReference type="Pfam" id="PF07686">
    <property type="entry name" value="V-set"/>
    <property type="match status" value="1"/>
</dbReference>
<dbReference type="SMART" id="SM00409">
    <property type="entry name" value="IG"/>
    <property type="match status" value="2"/>
</dbReference>
<dbReference type="SMART" id="SM00408">
    <property type="entry name" value="IGc2"/>
    <property type="match status" value="2"/>
</dbReference>
<dbReference type="SMART" id="SM00406">
    <property type="entry name" value="IGv"/>
    <property type="match status" value="1"/>
</dbReference>
<dbReference type="SUPFAM" id="SSF48726">
    <property type="entry name" value="Immunoglobulin"/>
    <property type="match status" value="2"/>
</dbReference>
<dbReference type="PROSITE" id="PS50835">
    <property type="entry name" value="IG_LIKE"/>
    <property type="match status" value="2"/>
</dbReference>
<organism>
    <name type="scientific">Rattus norvegicus</name>
    <name type="common">Rat</name>
    <dbReference type="NCBI Taxonomy" id="10116"/>
    <lineage>
        <taxon>Eukaryota</taxon>
        <taxon>Metazoa</taxon>
        <taxon>Chordata</taxon>
        <taxon>Craniata</taxon>
        <taxon>Vertebrata</taxon>
        <taxon>Euteleostomi</taxon>
        <taxon>Mammalia</taxon>
        <taxon>Eutheria</taxon>
        <taxon>Euarchontoglires</taxon>
        <taxon>Glires</taxon>
        <taxon>Rodentia</taxon>
        <taxon>Myomorpha</taxon>
        <taxon>Muroidea</taxon>
        <taxon>Muridae</taxon>
        <taxon>Murinae</taxon>
        <taxon>Rattus</taxon>
    </lineage>
</organism>
<sequence length="372" mass="41148">MSLFFLWLVTYYVGTLGTHTEIKRVAEEKVTLPCHHQLGLPEKDTLDIEWLLTDNEGNQKVVITYSSRHVYNNLTEEQKGRVAFASNFLAGDASLQIEPLKPSDEGRYTCKVKNSGRYVWSHVILKVLVRPSKPKCELEGEPTEGSDLTLQCESASGTKPIVYYWQRIREKEGEDEHLPPKSRIDYNNPGRVLLQNLTMASSGLYQCTAGNEAGKESCVVRVTVQYVQSIGMVAGAVTGIVAGALLIFLLIWLLIRRKSKERYEEEDRPNEIREDAEAPRARLVKPSSSSSGSRSSRSGSSSTRSTGNSASRSQRTLSSEAAPQPGLATQAYSLIGPEVRGSEPKKAHHTTLTKAETTLSTMPSQSRAFQTV</sequence>
<gene>
    <name type="primary">Clmp</name>
    <name type="synonym">Acam</name>
    <name type="synonym">Asam</name>
</gene>
<proteinExistence type="evidence at transcript level"/>
<keyword id="KW-0965">Cell junction</keyword>
<keyword id="KW-1003">Cell membrane</keyword>
<keyword id="KW-1015">Disulfide bond</keyword>
<keyword id="KW-0325">Glycoprotein</keyword>
<keyword id="KW-0393">Immunoglobulin domain</keyword>
<keyword id="KW-0472">Membrane</keyword>
<keyword id="KW-1185">Reference proteome</keyword>
<keyword id="KW-0677">Repeat</keyword>
<keyword id="KW-0732">Signal</keyword>
<keyword id="KW-0796">Tight junction</keyword>
<keyword id="KW-0812">Transmembrane</keyword>
<keyword id="KW-1133">Transmembrane helix</keyword>
<feature type="signal peptide" evidence="2">
    <location>
        <begin position="1"/>
        <end position="17"/>
    </location>
</feature>
<feature type="chain" id="PRO_0000293028" description="CXADR-like membrane protein">
    <location>
        <begin position="18"/>
        <end position="372"/>
    </location>
</feature>
<feature type="topological domain" description="Extracellular" evidence="2">
    <location>
        <begin position="18"/>
        <end position="234"/>
    </location>
</feature>
<feature type="transmembrane region" description="Helical" evidence="2">
    <location>
        <begin position="235"/>
        <end position="255"/>
    </location>
</feature>
<feature type="topological domain" description="Cytoplasmic" evidence="2">
    <location>
        <begin position="256"/>
        <end position="372"/>
    </location>
</feature>
<feature type="domain" description="Ig-like C2-type 1">
    <location>
        <begin position="18"/>
        <end position="126"/>
    </location>
</feature>
<feature type="domain" description="Ig-like C2-type 2">
    <location>
        <begin position="134"/>
        <end position="223"/>
    </location>
</feature>
<feature type="region of interest" description="Disordered" evidence="4">
    <location>
        <begin position="263"/>
        <end position="372"/>
    </location>
</feature>
<feature type="compositionally biased region" description="Basic and acidic residues" evidence="4">
    <location>
        <begin position="263"/>
        <end position="280"/>
    </location>
</feature>
<feature type="compositionally biased region" description="Low complexity" evidence="4">
    <location>
        <begin position="287"/>
        <end position="313"/>
    </location>
</feature>
<feature type="compositionally biased region" description="Low complexity" evidence="4">
    <location>
        <begin position="352"/>
        <end position="361"/>
    </location>
</feature>
<feature type="compositionally biased region" description="Polar residues" evidence="4">
    <location>
        <begin position="362"/>
        <end position="372"/>
    </location>
</feature>
<feature type="glycosylation site" description="N-linked (GlcNAc...) asparagine" evidence="2">
    <location>
        <position position="73"/>
    </location>
</feature>
<feature type="glycosylation site" description="N-linked (GlcNAc...) asparagine" evidence="2">
    <location>
        <position position="196"/>
    </location>
</feature>
<feature type="disulfide bond" evidence="3">
    <location>
        <begin position="34"/>
        <end position="110"/>
    </location>
</feature>
<feature type="disulfide bond" evidence="3">
    <location>
        <begin position="152"/>
        <end position="207"/>
    </location>
</feature>